<gene>
    <name type="primary">PLA2G7</name>
    <name type="synonym">PAFAH</name>
</gene>
<dbReference type="EC" id="3.1.1.47" evidence="3 9 11 14 15 16 17"/>
<dbReference type="EMBL" id="U20157">
    <property type="protein sequence ID" value="AAC50126.1"/>
    <property type="molecule type" value="mRNA"/>
</dbReference>
<dbReference type="EMBL" id="U24577">
    <property type="protein sequence ID" value="AAB04170.1"/>
    <property type="molecule type" value="mRNA"/>
</dbReference>
<dbReference type="EMBL" id="EF568110">
    <property type="protein sequence ID" value="ABQ01234.1"/>
    <property type="molecule type" value="Genomic_DNA"/>
</dbReference>
<dbReference type="EMBL" id="AL591242">
    <property type="status" value="NOT_ANNOTATED_CDS"/>
    <property type="molecule type" value="Genomic_DNA"/>
</dbReference>
<dbReference type="EMBL" id="CH471081">
    <property type="protein sequence ID" value="EAX04301.1"/>
    <property type="molecule type" value="Genomic_DNA"/>
</dbReference>
<dbReference type="EMBL" id="BC038452">
    <property type="protein sequence ID" value="AAH38452.1"/>
    <property type="molecule type" value="mRNA"/>
</dbReference>
<dbReference type="CCDS" id="CCDS4917.1"/>
<dbReference type="PIR" id="S60247">
    <property type="entry name" value="S60247"/>
</dbReference>
<dbReference type="RefSeq" id="NP_001161829.1">
    <property type="nucleotide sequence ID" value="NM_001168357.2"/>
</dbReference>
<dbReference type="RefSeq" id="NP_005075.3">
    <property type="nucleotide sequence ID" value="NM_005084.3"/>
</dbReference>
<dbReference type="RefSeq" id="XP_005249465.1">
    <property type="nucleotide sequence ID" value="XM_005249408.5"/>
</dbReference>
<dbReference type="RefSeq" id="XP_054212394.1">
    <property type="nucleotide sequence ID" value="XM_054356419.1"/>
</dbReference>
<dbReference type="PDB" id="3D59">
    <property type="method" value="X-ray"/>
    <property type="resolution" value="1.50 A"/>
    <property type="chains" value="A/B=47-429"/>
</dbReference>
<dbReference type="PDB" id="3D5E">
    <property type="method" value="X-ray"/>
    <property type="resolution" value="2.10 A"/>
    <property type="chains" value="A/B=47-429"/>
</dbReference>
<dbReference type="PDB" id="3F96">
    <property type="method" value="X-ray"/>
    <property type="resolution" value="2.10 A"/>
    <property type="chains" value="A/B=47-429"/>
</dbReference>
<dbReference type="PDB" id="3F97">
    <property type="method" value="X-ray"/>
    <property type="resolution" value="1.70 A"/>
    <property type="chains" value="A/B=47-429"/>
</dbReference>
<dbReference type="PDB" id="3F98">
    <property type="method" value="X-ray"/>
    <property type="resolution" value="1.70 A"/>
    <property type="chains" value="A/B/C=47-429"/>
</dbReference>
<dbReference type="PDB" id="3F9C">
    <property type="method" value="X-ray"/>
    <property type="resolution" value="2.30 A"/>
    <property type="chains" value="A/B=47-429"/>
</dbReference>
<dbReference type="PDB" id="5I8P">
    <property type="method" value="X-ray"/>
    <property type="resolution" value="2.37 A"/>
    <property type="chains" value="A/B=47-429"/>
</dbReference>
<dbReference type="PDB" id="5I9I">
    <property type="method" value="X-ray"/>
    <property type="resolution" value="2.70 A"/>
    <property type="chains" value="A/B=47-429"/>
</dbReference>
<dbReference type="PDB" id="5JAD">
    <property type="method" value="X-ray"/>
    <property type="resolution" value="2.05 A"/>
    <property type="chains" value="A=46-428"/>
</dbReference>
<dbReference type="PDB" id="5JAH">
    <property type="method" value="X-ray"/>
    <property type="resolution" value="2.06 A"/>
    <property type="chains" value="A=46-428"/>
</dbReference>
<dbReference type="PDB" id="5JAL">
    <property type="method" value="X-ray"/>
    <property type="resolution" value="2.06 A"/>
    <property type="chains" value="A=46-428"/>
</dbReference>
<dbReference type="PDB" id="5JAN">
    <property type="method" value="X-ray"/>
    <property type="resolution" value="2.12 A"/>
    <property type="chains" value="A=46-428"/>
</dbReference>
<dbReference type="PDB" id="5JAO">
    <property type="method" value="X-ray"/>
    <property type="resolution" value="2.06 A"/>
    <property type="chains" value="A=46-428"/>
</dbReference>
<dbReference type="PDB" id="5JAP">
    <property type="method" value="X-ray"/>
    <property type="resolution" value="2.46 A"/>
    <property type="chains" value="A=46-428"/>
</dbReference>
<dbReference type="PDB" id="5JAR">
    <property type="method" value="X-ray"/>
    <property type="resolution" value="2.11 A"/>
    <property type="chains" value="A=46-428"/>
</dbReference>
<dbReference type="PDB" id="5JAS">
    <property type="method" value="X-ray"/>
    <property type="resolution" value="2.06 A"/>
    <property type="chains" value="A=46-428"/>
</dbReference>
<dbReference type="PDB" id="5JAT">
    <property type="method" value="X-ray"/>
    <property type="resolution" value="2.04 A"/>
    <property type="chains" value="A=46-428"/>
</dbReference>
<dbReference type="PDB" id="5JAU">
    <property type="method" value="X-ray"/>
    <property type="resolution" value="1.95 A"/>
    <property type="chains" value="A=46-428"/>
</dbReference>
<dbReference type="PDB" id="5LP1">
    <property type="method" value="X-ray"/>
    <property type="resolution" value="1.91 A"/>
    <property type="chains" value="A=46-428"/>
</dbReference>
<dbReference type="PDB" id="5LYY">
    <property type="method" value="X-ray"/>
    <property type="resolution" value="2.17 A"/>
    <property type="chains" value="A=46-428"/>
</dbReference>
<dbReference type="PDB" id="5LZ2">
    <property type="method" value="X-ray"/>
    <property type="resolution" value="2.10 A"/>
    <property type="chains" value="A=46-428"/>
</dbReference>
<dbReference type="PDB" id="5LZ4">
    <property type="method" value="X-ray"/>
    <property type="resolution" value="2.07 A"/>
    <property type="chains" value="A=46-428"/>
</dbReference>
<dbReference type="PDB" id="5LZ5">
    <property type="method" value="X-ray"/>
    <property type="resolution" value="2.05 A"/>
    <property type="chains" value="A=46-428"/>
</dbReference>
<dbReference type="PDB" id="5LZ7">
    <property type="method" value="X-ray"/>
    <property type="resolution" value="2.10 A"/>
    <property type="chains" value="A=46-428"/>
</dbReference>
<dbReference type="PDB" id="5LZ8">
    <property type="method" value="X-ray"/>
    <property type="resolution" value="2.11 A"/>
    <property type="chains" value="A=46-428"/>
</dbReference>
<dbReference type="PDB" id="5LZ9">
    <property type="method" value="X-ray"/>
    <property type="resolution" value="2.06 A"/>
    <property type="chains" value="A=46-428"/>
</dbReference>
<dbReference type="PDB" id="5YE7">
    <property type="method" value="X-ray"/>
    <property type="resolution" value="2.31 A"/>
    <property type="chains" value="A/B=47-429"/>
</dbReference>
<dbReference type="PDB" id="5YE8">
    <property type="method" value="X-ray"/>
    <property type="resolution" value="1.85 A"/>
    <property type="chains" value="A/B=47-429"/>
</dbReference>
<dbReference type="PDB" id="5YE9">
    <property type="method" value="X-ray"/>
    <property type="resolution" value="1.88 A"/>
    <property type="chains" value="A/B=47-429"/>
</dbReference>
<dbReference type="PDB" id="5YEA">
    <property type="method" value="X-ray"/>
    <property type="resolution" value="1.80 A"/>
    <property type="chains" value="A/B=47-429"/>
</dbReference>
<dbReference type="PDB" id="6M06">
    <property type="method" value="X-ray"/>
    <property type="resolution" value="2.10 A"/>
    <property type="chains" value="A/B=54-424"/>
</dbReference>
<dbReference type="PDB" id="6M07">
    <property type="method" value="X-ray"/>
    <property type="resolution" value="2.64 A"/>
    <property type="chains" value="A/B=54-422"/>
</dbReference>
<dbReference type="PDB" id="6M08">
    <property type="method" value="X-ray"/>
    <property type="resolution" value="2.19 A"/>
    <property type="chains" value="A/B=54-424"/>
</dbReference>
<dbReference type="PDBsum" id="3D59"/>
<dbReference type="PDBsum" id="3D5E"/>
<dbReference type="PDBsum" id="3F96"/>
<dbReference type="PDBsum" id="3F97"/>
<dbReference type="PDBsum" id="3F98"/>
<dbReference type="PDBsum" id="3F9C"/>
<dbReference type="PDBsum" id="5I8P"/>
<dbReference type="PDBsum" id="5I9I"/>
<dbReference type="PDBsum" id="5JAD"/>
<dbReference type="PDBsum" id="5JAH"/>
<dbReference type="PDBsum" id="5JAL"/>
<dbReference type="PDBsum" id="5JAN"/>
<dbReference type="PDBsum" id="5JAO"/>
<dbReference type="PDBsum" id="5JAP"/>
<dbReference type="PDBsum" id="5JAR"/>
<dbReference type="PDBsum" id="5JAS"/>
<dbReference type="PDBsum" id="5JAT"/>
<dbReference type="PDBsum" id="5JAU"/>
<dbReference type="PDBsum" id="5LP1"/>
<dbReference type="PDBsum" id="5LYY"/>
<dbReference type="PDBsum" id="5LZ2"/>
<dbReference type="PDBsum" id="5LZ4"/>
<dbReference type="PDBsum" id="5LZ5"/>
<dbReference type="PDBsum" id="5LZ7"/>
<dbReference type="PDBsum" id="5LZ8"/>
<dbReference type="PDBsum" id="5LZ9"/>
<dbReference type="PDBsum" id="5YE7"/>
<dbReference type="PDBsum" id="5YE8"/>
<dbReference type="PDBsum" id="5YE9"/>
<dbReference type="PDBsum" id="5YEA"/>
<dbReference type="PDBsum" id="6M06"/>
<dbReference type="PDBsum" id="6M07"/>
<dbReference type="PDBsum" id="6M08"/>
<dbReference type="SMR" id="Q13093"/>
<dbReference type="BioGRID" id="113667">
    <property type="interactions" value="3"/>
</dbReference>
<dbReference type="FunCoup" id="Q13093">
    <property type="interactions" value="88"/>
</dbReference>
<dbReference type="IntAct" id="Q13093">
    <property type="interactions" value="6"/>
</dbReference>
<dbReference type="STRING" id="9606.ENSP00000274793"/>
<dbReference type="BindingDB" id="Q13093"/>
<dbReference type="ChEMBL" id="CHEMBL3514"/>
<dbReference type="DrugBank" id="DB07821">
    <property type="generic name" value="(1R)-1,2,2-trimethylpropyl (R)-methylphosphinate"/>
</dbReference>
<dbReference type="DrugBank" id="DB05119">
    <property type="generic name" value="Rilapladib"/>
</dbReference>
<dbReference type="DrugCentral" id="Q13093"/>
<dbReference type="GuidetoPHARMACOLOGY" id="1432"/>
<dbReference type="SwissLipids" id="SLP:000000204"/>
<dbReference type="ESTHER" id="human-PLA2G7">
    <property type="family name" value="PAF-Acetylhydrolase"/>
</dbReference>
<dbReference type="GlyCosmos" id="Q13093">
    <property type="glycosylation" value="2 sites, No reported glycans"/>
</dbReference>
<dbReference type="GlyGen" id="Q13093">
    <property type="glycosylation" value="2 sites"/>
</dbReference>
<dbReference type="iPTMnet" id="Q13093"/>
<dbReference type="PhosphoSitePlus" id="Q13093"/>
<dbReference type="BioMuta" id="PLA2G7"/>
<dbReference type="DMDM" id="2497687"/>
<dbReference type="jPOST" id="Q13093"/>
<dbReference type="MassIVE" id="Q13093"/>
<dbReference type="PaxDb" id="9606-ENSP00000274793"/>
<dbReference type="PeptideAtlas" id="Q13093"/>
<dbReference type="ProteomicsDB" id="59145"/>
<dbReference type="Pumba" id="Q13093"/>
<dbReference type="Antibodypedia" id="30742">
    <property type="antibodies" value="377 antibodies from 32 providers"/>
</dbReference>
<dbReference type="DNASU" id="7941"/>
<dbReference type="Ensembl" id="ENST00000274793.12">
    <property type="protein sequence ID" value="ENSP00000274793.7"/>
    <property type="gene ID" value="ENSG00000146070.17"/>
</dbReference>
<dbReference type="Ensembl" id="ENST00000537365.1">
    <property type="protein sequence ID" value="ENSP00000445666.1"/>
    <property type="gene ID" value="ENSG00000146070.17"/>
</dbReference>
<dbReference type="GeneID" id="7941"/>
<dbReference type="KEGG" id="hsa:7941"/>
<dbReference type="MANE-Select" id="ENST00000274793.12">
    <property type="protein sequence ID" value="ENSP00000274793.7"/>
    <property type="RefSeq nucleotide sequence ID" value="NM_005084.4"/>
    <property type="RefSeq protein sequence ID" value="NP_005075.3"/>
</dbReference>
<dbReference type="UCSC" id="uc010jzf.4">
    <property type="organism name" value="human"/>
</dbReference>
<dbReference type="AGR" id="HGNC:9040"/>
<dbReference type="CTD" id="7941"/>
<dbReference type="DisGeNET" id="7941"/>
<dbReference type="GeneCards" id="PLA2G7"/>
<dbReference type="HGNC" id="HGNC:9040">
    <property type="gene designation" value="PLA2G7"/>
</dbReference>
<dbReference type="HPA" id="ENSG00000146070">
    <property type="expression patterns" value="Tissue enhanced (lymphoid tissue, placenta)"/>
</dbReference>
<dbReference type="MalaCards" id="PLA2G7"/>
<dbReference type="MIM" id="601690">
    <property type="type" value="gene"/>
</dbReference>
<dbReference type="MIM" id="614278">
    <property type="type" value="phenotype"/>
</dbReference>
<dbReference type="neXtProt" id="NX_Q13093"/>
<dbReference type="OpenTargets" id="ENSG00000146070"/>
<dbReference type="PharmGKB" id="PA33368"/>
<dbReference type="VEuPathDB" id="HostDB:ENSG00000146070"/>
<dbReference type="eggNOG" id="KOG3847">
    <property type="taxonomic scope" value="Eukaryota"/>
</dbReference>
<dbReference type="GeneTree" id="ENSGT00390000005233"/>
<dbReference type="HOGENOM" id="CLU_022501_0_1_1"/>
<dbReference type="InParanoid" id="Q13093"/>
<dbReference type="OMA" id="GSVHHNF"/>
<dbReference type="OrthoDB" id="2363873at2759"/>
<dbReference type="PAN-GO" id="Q13093">
    <property type="GO annotations" value="1 GO annotation based on evolutionary models"/>
</dbReference>
<dbReference type="PhylomeDB" id="Q13093"/>
<dbReference type="TreeFam" id="TF313831"/>
<dbReference type="BRENDA" id="3.1.1.4">
    <property type="organism ID" value="2681"/>
</dbReference>
<dbReference type="BRENDA" id="3.1.1.47">
    <property type="organism ID" value="2681"/>
</dbReference>
<dbReference type="PathwayCommons" id="Q13093"/>
<dbReference type="Reactome" id="R-HSA-422085">
    <property type="pathway name" value="Synthesis, secretion, and deacylation of Ghrelin"/>
</dbReference>
<dbReference type="SABIO-RK" id="Q13093"/>
<dbReference type="SignaLink" id="Q13093"/>
<dbReference type="SIGNOR" id="Q13093"/>
<dbReference type="BioGRID-ORCS" id="7941">
    <property type="hits" value="16 hits in 1146 CRISPR screens"/>
</dbReference>
<dbReference type="EvolutionaryTrace" id="Q13093"/>
<dbReference type="GeneWiki" id="Lipoprotein-associated_phospholipase_A2"/>
<dbReference type="GenomeRNAi" id="7941"/>
<dbReference type="Pharos" id="Q13093">
    <property type="development level" value="Tchem"/>
</dbReference>
<dbReference type="PRO" id="PR:Q13093"/>
<dbReference type="Proteomes" id="UP000005640">
    <property type="component" value="Chromosome 6"/>
</dbReference>
<dbReference type="RNAct" id="Q13093">
    <property type="molecule type" value="protein"/>
</dbReference>
<dbReference type="Bgee" id="ENSG00000146070">
    <property type="expression patterns" value="Expressed in amniotic fluid and 134 other cell types or tissues"/>
</dbReference>
<dbReference type="GO" id="GO:0005576">
    <property type="term" value="C:extracellular region"/>
    <property type="evidence" value="ECO:0000304"/>
    <property type="project" value="Reactome"/>
</dbReference>
<dbReference type="GO" id="GO:0034364">
    <property type="term" value="C:high-density lipoprotein particle"/>
    <property type="evidence" value="ECO:0000314"/>
    <property type="project" value="UniProtKB"/>
</dbReference>
<dbReference type="GO" id="GO:0034362">
    <property type="term" value="C:low-density lipoprotein particle"/>
    <property type="evidence" value="ECO:0000314"/>
    <property type="project" value="UniProtKB"/>
</dbReference>
<dbReference type="GO" id="GO:0003847">
    <property type="term" value="F:1-alkyl-2-acetylglycerophosphocholine esterase activity"/>
    <property type="evidence" value="ECO:0000314"/>
    <property type="project" value="UniProtKB"/>
</dbReference>
<dbReference type="GO" id="GO:0047499">
    <property type="term" value="F:calcium-independent phospholipase A2 activity"/>
    <property type="evidence" value="ECO:0000314"/>
    <property type="project" value="UniProtKB"/>
</dbReference>
<dbReference type="GO" id="GO:0016788">
    <property type="term" value="F:hydrolase activity, acting on ester bonds"/>
    <property type="evidence" value="ECO:0000304"/>
    <property type="project" value="Reactome"/>
</dbReference>
<dbReference type="GO" id="GO:0005543">
    <property type="term" value="F:phospholipid binding"/>
    <property type="evidence" value="ECO:0000314"/>
    <property type="project" value="BHF-UCL"/>
</dbReference>
<dbReference type="GO" id="GO:0034440">
    <property type="term" value="P:lipid oxidation"/>
    <property type="evidence" value="ECO:0000314"/>
    <property type="project" value="BHF-UCL"/>
</dbReference>
<dbReference type="GO" id="GO:0034374">
    <property type="term" value="P:low-density lipoprotein particle remodeling"/>
    <property type="evidence" value="ECO:0000314"/>
    <property type="project" value="BHF-UCL"/>
</dbReference>
<dbReference type="GO" id="GO:0016486">
    <property type="term" value="P:peptide hormone processing"/>
    <property type="evidence" value="ECO:0000304"/>
    <property type="project" value="Reactome"/>
</dbReference>
<dbReference type="GO" id="GO:0034638">
    <property type="term" value="P:phosphatidylcholine catabolic process"/>
    <property type="evidence" value="ECO:0000314"/>
    <property type="project" value="UniProtKB"/>
</dbReference>
<dbReference type="GO" id="GO:0034441">
    <property type="term" value="P:plasma lipoprotein particle oxidation"/>
    <property type="evidence" value="ECO:0000314"/>
    <property type="project" value="BHF-UCL"/>
</dbReference>
<dbReference type="GO" id="GO:0062234">
    <property type="term" value="P:platelet activating factor catabolic process"/>
    <property type="evidence" value="ECO:0000314"/>
    <property type="project" value="UniProtKB"/>
</dbReference>
<dbReference type="GO" id="GO:0046469">
    <property type="term" value="P:platelet activating factor metabolic process"/>
    <property type="evidence" value="ECO:0000314"/>
    <property type="project" value="UniProtKB"/>
</dbReference>
<dbReference type="GO" id="GO:0050729">
    <property type="term" value="P:positive regulation of inflammatory response"/>
    <property type="evidence" value="ECO:0000304"/>
    <property type="project" value="BHF-UCL"/>
</dbReference>
<dbReference type="GO" id="GO:0090026">
    <property type="term" value="P:positive regulation of monocyte chemotaxis"/>
    <property type="evidence" value="ECO:0000314"/>
    <property type="project" value="BHF-UCL"/>
</dbReference>
<dbReference type="FunFam" id="3.40.50.1820:FF:000062">
    <property type="entry name" value="Platelet-activating factor acetylhydrolase"/>
    <property type="match status" value="1"/>
</dbReference>
<dbReference type="Gene3D" id="3.40.50.1820">
    <property type="entry name" value="alpha/beta hydrolase"/>
    <property type="match status" value="1"/>
</dbReference>
<dbReference type="InterPro" id="IPR029058">
    <property type="entry name" value="AB_hydrolase_fold"/>
</dbReference>
<dbReference type="InterPro" id="IPR016715">
    <property type="entry name" value="PAF_acetylhydro_eukaryote"/>
</dbReference>
<dbReference type="PANTHER" id="PTHR10272">
    <property type="entry name" value="PLATELET-ACTIVATING FACTOR ACETYLHYDROLASE"/>
    <property type="match status" value="1"/>
</dbReference>
<dbReference type="PANTHER" id="PTHR10272:SF12">
    <property type="entry name" value="PLATELET-ACTIVATING FACTOR ACETYLHYDROLASE"/>
    <property type="match status" value="1"/>
</dbReference>
<dbReference type="Pfam" id="PF03403">
    <property type="entry name" value="PAF-AH_p_II"/>
    <property type="match status" value="1"/>
</dbReference>
<dbReference type="PIRSF" id="PIRSF018169">
    <property type="entry name" value="PAF_acetylhydrolase"/>
    <property type="match status" value="1"/>
</dbReference>
<dbReference type="SUPFAM" id="SSF53474">
    <property type="entry name" value="alpha/beta-Hydrolases"/>
    <property type="match status" value="1"/>
</dbReference>
<dbReference type="PROSITE" id="PS00120">
    <property type="entry name" value="LIPASE_SER"/>
    <property type="match status" value="1"/>
</dbReference>
<proteinExistence type="evidence at protein level"/>
<reference key="1">
    <citation type="journal article" date="1995" name="Nature">
        <title>Anti-inflammatory properties of a platelet-activating factor acetylhydrolase.</title>
        <authorList>
            <person name="Tjoelker L.W."/>
            <person name="Wilder C."/>
            <person name="Eberhardt C."/>
            <person name="Stafforini D.M."/>
            <person name="Dietsch G."/>
            <person name="Schimpf B."/>
            <person name="Hooper S."/>
            <person name="le Trong H."/>
            <person name="Cousens L.S."/>
            <person name="Zimmerman G.A."/>
            <person name="Yamada Y."/>
            <person name="McIntyre T.M."/>
            <person name="Prescott S.M."/>
            <person name="Gray P.W."/>
        </authorList>
    </citation>
    <scope>NUCLEOTIDE SEQUENCE [MRNA]</scope>
    <scope>PROTEIN SEQUENCE OF 42-57</scope>
    <scope>FUNCTION</scope>
    <scope>CATALYTIC ACTIVITY</scope>
    <source>
        <tissue>Myeloid</tissue>
    </source>
</reference>
<reference key="2">
    <citation type="journal article" date="1996" name="Arterioscler. Thromb. Vasc. Biol.">
        <title>Purification, properties, sequencing, and cloning of a lipoprotein-associated, serine-dependent phospholipase involved in the oxidative modification of low-density lipoproteins.</title>
        <authorList>
            <person name="Tew D.G."/>
            <person name="Southan C."/>
            <person name="Rice S.Q.J."/>
            <person name="Lawrence M.P."/>
            <person name="Li H."/>
            <person name="Boyd H.F."/>
            <person name="Moores K."/>
            <person name="Gloger I.S."/>
            <person name="Macphee C.H."/>
        </authorList>
    </citation>
    <scope>NUCLEOTIDE SEQUENCE [MRNA]</scope>
    <scope>PARTIAL PROTEIN SEQUENCE</scope>
    <scope>FUNCTION</scope>
    <scope>CATALYTIC ACTIVITY</scope>
    <source>
        <tissue>Lymphoma</tissue>
    </source>
</reference>
<reference key="3">
    <citation type="submission" date="2007-04" db="EMBL/GenBank/DDBJ databases">
        <authorList>
            <consortium name="SeattleSNPs variation discovery resource"/>
        </authorList>
    </citation>
    <scope>NUCLEOTIDE SEQUENCE [GENOMIC DNA]</scope>
    <scope>VARIANTS PRO-45; HIS-92; ASN-191; THR-198 AND ALA-379</scope>
</reference>
<reference key="4">
    <citation type="journal article" date="2003" name="Nature">
        <title>The DNA sequence and analysis of human chromosome 6.</title>
        <authorList>
            <person name="Mungall A.J."/>
            <person name="Palmer S.A."/>
            <person name="Sims S.K."/>
            <person name="Edwards C.A."/>
            <person name="Ashurst J.L."/>
            <person name="Wilming L."/>
            <person name="Jones M.C."/>
            <person name="Horton R."/>
            <person name="Hunt S.E."/>
            <person name="Scott C.E."/>
            <person name="Gilbert J.G.R."/>
            <person name="Clamp M.E."/>
            <person name="Bethel G."/>
            <person name="Milne S."/>
            <person name="Ainscough R."/>
            <person name="Almeida J.P."/>
            <person name="Ambrose K.D."/>
            <person name="Andrews T.D."/>
            <person name="Ashwell R.I.S."/>
            <person name="Babbage A.K."/>
            <person name="Bagguley C.L."/>
            <person name="Bailey J."/>
            <person name="Banerjee R."/>
            <person name="Barker D.J."/>
            <person name="Barlow K.F."/>
            <person name="Bates K."/>
            <person name="Beare D.M."/>
            <person name="Beasley H."/>
            <person name="Beasley O."/>
            <person name="Bird C.P."/>
            <person name="Blakey S.E."/>
            <person name="Bray-Allen S."/>
            <person name="Brook J."/>
            <person name="Brown A.J."/>
            <person name="Brown J.Y."/>
            <person name="Burford D.C."/>
            <person name="Burrill W."/>
            <person name="Burton J."/>
            <person name="Carder C."/>
            <person name="Carter N.P."/>
            <person name="Chapman J.C."/>
            <person name="Clark S.Y."/>
            <person name="Clark G."/>
            <person name="Clee C.M."/>
            <person name="Clegg S."/>
            <person name="Cobley V."/>
            <person name="Collier R.E."/>
            <person name="Collins J.E."/>
            <person name="Colman L.K."/>
            <person name="Corby N.R."/>
            <person name="Coville G.J."/>
            <person name="Culley K.M."/>
            <person name="Dhami P."/>
            <person name="Davies J."/>
            <person name="Dunn M."/>
            <person name="Earthrowl M.E."/>
            <person name="Ellington A.E."/>
            <person name="Evans K.A."/>
            <person name="Faulkner L."/>
            <person name="Francis M.D."/>
            <person name="Frankish A."/>
            <person name="Frankland J."/>
            <person name="French L."/>
            <person name="Garner P."/>
            <person name="Garnett J."/>
            <person name="Ghori M.J."/>
            <person name="Gilby L.M."/>
            <person name="Gillson C.J."/>
            <person name="Glithero R.J."/>
            <person name="Grafham D.V."/>
            <person name="Grant M."/>
            <person name="Gribble S."/>
            <person name="Griffiths C."/>
            <person name="Griffiths M.N.D."/>
            <person name="Hall R."/>
            <person name="Halls K.S."/>
            <person name="Hammond S."/>
            <person name="Harley J.L."/>
            <person name="Hart E.A."/>
            <person name="Heath P.D."/>
            <person name="Heathcott R."/>
            <person name="Holmes S.J."/>
            <person name="Howden P.J."/>
            <person name="Howe K.L."/>
            <person name="Howell G.R."/>
            <person name="Huckle E."/>
            <person name="Humphray S.J."/>
            <person name="Humphries M.D."/>
            <person name="Hunt A.R."/>
            <person name="Johnson C.M."/>
            <person name="Joy A.A."/>
            <person name="Kay M."/>
            <person name="Keenan S.J."/>
            <person name="Kimberley A.M."/>
            <person name="King A."/>
            <person name="Laird G.K."/>
            <person name="Langford C."/>
            <person name="Lawlor S."/>
            <person name="Leongamornlert D.A."/>
            <person name="Leversha M."/>
            <person name="Lloyd C.R."/>
            <person name="Lloyd D.M."/>
            <person name="Loveland J.E."/>
            <person name="Lovell J."/>
            <person name="Martin S."/>
            <person name="Mashreghi-Mohammadi M."/>
            <person name="Maslen G.L."/>
            <person name="Matthews L."/>
            <person name="McCann O.T."/>
            <person name="McLaren S.J."/>
            <person name="McLay K."/>
            <person name="McMurray A."/>
            <person name="Moore M.J.F."/>
            <person name="Mullikin J.C."/>
            <person name="Niblett D."/>
            <person name="Nickerson T."/>
            <person name="Novik K.L."/>
            <person name="Oliver K."/>
            <person name="Overton-Larty E.K."/>
            <person name="Parker A."/>
            <person name="Patel R."/>
            <person name="Pearce A.V."/>
            <person name="Peck A.I."/>
            <person name="Phillimore B.J.C.T."/>
            <person name="Phillips S."/>
            <person name="Plumb R.W."/>
            <person name="Porter K.M."/>
            <person name="Ramsey Y."/>
            <person name="Ranby S.A."/>
            <person name="Rice C.M."/>
            <person name="Ross M.T."/>
            <person name="Searle S.M."/>
            <person name="Sehra H.K."/>
            <person name="Sheridan E."/>
            <person name="Skuce C.D."/>
            <person name="Smith S."/>
            <person name="Smith M."/>
            <person name="Spraggon L."/>
            <person name="Squares S.L."/>
            <person name="Steward C.A."/>
            <person name="Sycamore N."/>
            <person name="Tamlyn-Hall G."/>
            <person name="Tester J."/>
            <person name="Theaker A.J."/>
            <person name="Thomas D.W."/>
            <person name="Thorpe A."/>
            <person name="Tracey A."/>
            <person name="Tromans A."/>
            <person name="Tubby B."/>
            <person name="Wall M."/>
            <person name="Wallis J.M."/>
            <person name="West A.P."/>
            <person name="White S.S."/>
            <person name="Whitehead S.L."/>
            <person name="Whittaker H."/>
            <person name="Wild A."/>
            <person name="Willey D.J."/>
            <person name="Wilmer T.E."/>
            <person name="Wood J.M."/>
            <person name="Wray P.W."/>
            <person name="Wyatt J.C."/>
            <person name="Young L."/>
            <person name="Younger R.M."/>
            <person name="Bentley D.R."/>
            <person name="Coulson A."/>
            <person name="Durbin R.M."/>
            <person name="Hubbard T."/>
            <person name="Sulston J.E."/>
            <person name="Dunham I."/>
            <person name="Rogers J."/>
            <person name="Beck S."/>
        </authorList>
    </citation>
    <scope>NUCLEOTIDE SEQUENCE [LARGE SCALE GENOMIC DNA]</scope>
</reference>
<reference key="5">
    <citation type="submission" date="2005-07" db="EMBL/GenBank/DDBJ databases">
        <authorList>
            <person name="Mural R.J."/>
            <person name="Istrail S."/>
            <person name="Sutton G.G."/>
            <person name="Florea L."/>
            <person name="Halpern A.L."/>
            <person name="Mobarry C.M."/>
            <person name="Lippert R."/>
            <person name="Walenz B."/>
            <person name="Shatkay H."/>
            <person name="Dew I."/>
            <person name="Miller J.R."/>
            <person name="Flanigan M.J."/>
            <person name="Edwards N.J."/>
            <person name="Bolanos R."/>
            <person name="Fasulo D."/>
            <person name="Halldorsson B.V."/>
            <person name="Hannenhalli S."/>
            <person name="Turner R."/>
            <person name="Yooseph S."/>
            <person name="Lu F."/>
            <person name="Nusskern D.R."/>
            <person name="Shue B.C."/>
            <person name="Zheng X.H."/>
            <person name="Zhong F."/>
            <person name="Delcher A.L."/>
            <person name="Huson D.H."/>
            <person name="Kravitz S.A."/>
            <person name="Mouchard L."/>
            <person name="Reinert K."/>
            <person name="Remington K.A."/>
            <person name="Clark A.G."/>
            <person name="Waterman M.S."/>
            <person name="Eichler E.E."/>
            <person name="Adams M.D."/>
            <person name="Hunkapiller M.W."/>
            <person name="Myers E.W."/>
            <person name="Venter J.C."/>
        </authorList>
    </citation>
    <scope>NUCLEOTIDE SEQUENCE [LARGE SCALE GENOMIC DNA]</scope>
    <scope>VARIANT ALA-379</scope>
</reference>
<reference key="6">
    <citation type="journal article" date="2004" name="Genome Res.">
        <title>The status, quality, and expansion of the NIH full-length cDNA project: the Mammalian Gene Collection (MGC).</title>
        <authorList>
            <consortium name="The MGC Project Team"/>
        </authorList>
    </citation>
    <scope>NUCLEOTIDE SEQUENCE [LARGE SCALE MRNA]</scope>
    <scope>VARIANT ALA-379</scope>
    <source>
        <tissue>Blood</tissue>
    </source>
</reference>
<reference key="7">
    <citation type="journal article" date="1991" name="J. Biol. Chem.">
        <title>Human plasma platelet-activating factor acetylhydrolase. Oxidatively fragmented phospholipids as substrates.</title>
        <authorList>
            <person name="Stremler K.E."/>
            <person name="Stafforini D.M."/>
            <person name="Prescott S.M."/>
            <person name="McIntyre T.M."/>
        </authorList>
    </citation>
    <scope>FUNCTION</scope>
    <scope>CATALYTIC ACTIVITY</scope>
    <scope>BIOPHYSICOCHEMICAL PROPERTIES</scope>
</reference>
<reference key="8">
    <citation type="journal article" date="1995" name="J. Biol. Chem.">
        <title>Plasma platelet-activating factor acetylhydrolase is a secreted phospholipase A2 with a catalytic triad.</title>
        <authorList>
            <person name="Tjoelker L.W."/>
            <person name="Eberhardt C."/>
            <person name="Unger J."/>
            <person name="le Trong H."/>
            <person name="Zimmerman G.A."/>
            <person name="McIntyre T.M."/>
            <person name="Stafforini D.M."/>
            <person name="Prescott S.M."/>
            <person name="Gray P.W."/>
        </authorList>
    </citation>
    <scope>CATALYTIC ACTIVITY</scope>
    <scope>MUTAGENESIS OF SER-108; SER-273; ASP-286; ASP-296; ASP-304; ASP-338 AND HIS-351</scope>
</reference>
<reference key="9">
    <citation type="journal article" date="1999" name="Biochemistry">
        <title>Membrane-bound plasma platelet activating factor acetylhydrolase acts on substrate in the aqueous phase.</title>
        <authorList>
            <person name="Min J.H."/>
            <person name="Jain M.K."/>
            <person name="Wilder C."/>
            <person name="Paul L."/>
            <person name="Apitz-Castro R."/>
            <person name="Aspleaf D.C."/>
            <person name="Gelb M.H."/>
        </authorList>
    </citation>
    <scope>FUNCTION</scope>
    <scope>CATALYTIC ACTIVITY</scope>
</reference>
<reference key="10">
    <citation type="journal article" date="1999" name="J. Biol. Chem.">
        <title>Molecular basis of the interaction between plasma platelet-activating factor acetylhydrolase and low density lipoprotein.</title>
        <authorList>
            <person name="Stafforini D.M."/>
            <person name="Tjoelker L.W."/>
            <person name="McCormick S.P."/>
            <person name="Vaitkus D."/>
            <person name="McIntyre T.M."/>
            <person name="Gray P.W."/>
            <person name="Young S.G."/>
            <person name="Prescott S.M."/>
        </authorList>
    </citation>
    <scope>FUNCTION</scope>
    <scope>CATALYTIC ACTIVITY</scope>
    <scope>SUBCELLULAR LOCATION</scope>
    <scope>MUTAGENESIS OF HIS-114; TRP-115; LEU-116; MET-117 AND TYR-205</scope>
</reference>
<reference key="11">
    <citation type="journal article" date="2001" name="J. Lipid Res.">
        <title>N-linked glycosylation of macrophage-derived PAF-AH is a major determinant of enzyme association with plasma HDL.</title>
        <authorList>
            <person name="Tselepis A.D."/>
            <person name="Karabina S.A."/>
            <person name="Stengel D."/>
            <person name="Piedagnel R."/>
            <person name="Chapman M.J."/>
            <person name="Ninio E."/>
        </authorList>
    </citation>
    <scope>FUNCTION</scope>
    <scope>CATALYTIC ACTIVITY</scope>
    <scope>SUBCELLULAR LOCATION</scope>
    <scope>GLYCOSYLATION</scope>
    <scope>TISSUE SPECIFICITY</scope>
    <scope>INDUCTION</scope>
</reference>
<reference key="12">
    <citation type="journal article" date="2003" name="Circulation">
        <title>Platelet-activating factor acetylhydrolase is mainly associated with electronegative low-density lipoprotein subfraction.</title>
        <authorList>
            <person name="Benitez S."/>
            <person name="Sanchez-Quesada J.L."/>
            <person name="Ribas V."/>
            <person name="Jorba O."/>
            <person name="Blanco-Vaca F."/>
            <person name="Gonzalez-Sastre F."/>
            <person name="Ordonez-Llanos J."/>
        </authorList>
    </citation>
    <scope>SUBCELLULAR LOCATION</scope>
    <scope>TISSUE SPECIFICITY</scope>
</reference>
<reference key="13">
    <citation type="journal article" date="2006" name="J. Biol. Chem.">
        <title>Release of free F2-isoprostanes from esterified phospholipids is catalyzed by intracellular and plasma platelet-activating factor acetylhydrolases.</title>
        <authorList>
            <person name="Stafforini D.M."/>
            <person name="Sheller J.R."/>
            <person name="Blackwell T.S."/>
            <person name="Sapirstein A."/>
            <person name="Yull F.E."/>
            <person name="McIntyre T.M."/>
            <person name="Bonventre J.V."/>
            <person name="Prescott S.M."/>
            <person name="Roberts L.J. II"/>
        </authorList>
    </citation>
    <scope>FUNCTION</scope>
    <scope>CATALYTIC ACTIVITY</scope>
    <scope>BIOPHYSICOCHEMICAL PROPERTIES</scope>
    <scope>VARIANT PHE-279</scope>
</reference>
<reference key="14">
    <citation type="journal article" date="2007" name="J. Biol. Chem.">
        <title>Phospholipase action of platelet-activating factor acetylhydrolase, but not paraoxonase-1, on long fatty acyl chain phospholipid hydroperoxides.</title>
        <authorList>
            <person name="Kriska T."/>
            <person name="Marathe G.K."/>
            <person name="Schmidt J.C."/>
            <person name="McIntyre T.M."/>
            <person name="Girotti A.W."/>
        </authorList>
    </citation>
    <scope>FUNCTION</scope>
    <scope>CATALYTIC ACTIVITY</scope>
</reference>
<reference key="15">
    <citation type="journal article" date="2008" name="J. Biol. Chem.">
        <title>Identification of a domain that mediates association of platelet-activating factor acetylhydrolase with high density lipoprotein.</title>
        <authorList>
            <person name="Gardner A.A."/>
            <person name="Reichert E.C."/>
            <person name="Topham M.K."/>
            <person name="Stafforini D.M."/>
        </authorList>
    </citation>
    <scope>FUNCTION</scope>
    <scope>CATALYTIC ACTIVITY</scope>
    <scope>SUBCELLULAR LOCATION</scope>
    <scope>MUTAGENESIS OF HIS-367; MET-368; LEU-369 AND LYS-370</scope>
    <scope>VARIANTS HIS-92; THR-198 AND ALA-379</scope>
</reference>
<reference key="16">
    <citation type="journal article" date="2008" name="J. Biol. Chem.">
        <title>Crystal structure of human plasma platelet-activating factor acetylhydrolase: structural implication to lipoprotein binding and catalysis.</title>
        <authorList>
            <person name="Samanta U."/>
            <person name="Bahnson B.J."/>
        </authorList>
    </citation>
    <scope>X-RAY CRYSTALLOGRAPHY (1.5 ANGSTROMS) OF 47-429 ALONE AND IN COMPLEX WITH PARAOXON</scope>
    <scope>ACTIVE SITE</scope>
</reference>
<reference key="17">
    <citation type="journal article" date="2009" name="Biochem. Pharmacol.">
        <title>Crystal structures of human group-VIIA phospholipase A2 inhibited by organophosphorus nerve agents exhibit non-aged complexes.</title>
        <authorList>
            <person name="Samanta U."/>
            <person name="Kirby S.D."/>
            <person name="Srinivasan P."/>
            <person name="Cerasoli D.M."/>
            <person name="Bahnson B.J."/>
        </authorList>
    </citation>
    <scope>X-RAY CRYSTALLOGRAPHY (1.7 ANGSTROMS) OF 47-429 IN COMPLEX WITH ORGANOPHOSPHORUS NERVE AGENTS</scope>
</reference>
<reference key="18">
    <citation type="journal article" date="1996" name="J. Clin. Invest.">
        <title>Platelet-activating factor acetylhydrolase deficiency. A missense mutation near the active site of an anti-inflammatory phospholipase.</title>
        <authorList>
            <person name="Stafforini D.M."/>
            <person name="Satoh K."/>
            <person name="Atkinson D.L."/>
            <person name="Tjoelker L.W."/>
            <person name="Eberhardt C."/>
            <person name="Yoshida H."/>
            <person name="Imaizumi T."/>
            <person name="Takamatsu S."/>
            <person name="Zimmerman G.A."/>
            <person name="McIntyre T.M."/>
            <person name="Gray P.W."/>
            <person name="Prescott S.M."/>
        </authorList>
    </citation>
    <scope>VARIANT PAFAD PHE-279</scope>
    <scope>FUNCTION</scope>
    <scope>CATALYTIC ACTIVITY</scope>
</reference>
<reference key="19">
    <citation type="journal article" date="1997" name="Biochem. Biophys. Res. Commun.">
        <title>Loss of activity of plasma platelet-activating factor acetylhydrolase due to a novel Gln281--&gt;Arg mutation.</title>
        <authorList>
            <person name="Yamada Y."/>
            <person name="Yokota M."/>
        </authorList>
    </citation>
    <scope>VARIANT PAFAD ARG-281</scope>
</reference>
<reference key="20">
    <citation type="journal article" date="1997" name="Stroke">
        <title>A mutation in plasma platelet-activating factor acetylhydrolase (Val279--&gt;Phe) is a genetic risk factor for stroke.</title>
        <authorList>
            <person name="Hiramoto M."/>
            <person name="Yoshida H."/>
            <person name="Imaizumi T."/>
            <person name="Yoshimizu N."/>
            <person name="Satoh K."/>
        </authorList>
    </citation>
    <scope>VARIANT PAFAD PHE-279</scope>
</reference>
<reference key="21">
    <citation type="journal article" date="1998" name="Metabolism">
        <title>Identification of the G994--&gt; T missense in exon 9 of the plasma platelet-activating factor acetylhydrolase gene as an independent risk factor for coronary artery disease in Japanese men.</title>
        <authorList>
            <person name="Yamada Y."/>
            <person name="Ichihara S."/>
            <person name="Fujimura T."/>
            <person name="Yokota M."/>
        </authorList>
    </citation>
    <scope>VARIANT PAFAD PHE-279</scope>
</reference>
<reference key="22">
    <citation type="journal article" date="1998" name="Thromb. Haemost.">
        <title>A mutation in plasma platelet-activating factor acetylhydrolase (Val279Phe) is a genetic risk factor for cerebral hemorrhage but not for hypertension.</title>
        <authorList>
            <person name="Yoshida H."/>
            <person name="Imaizumi T."/>
            <person name="Fujimoto K."/>
            <person name="Itaya H."/>
            <person name="Hiramoto M."/>
            <person name="Yoshimizu N."/>
            <person name="Fukushi K."/>
            <person name="Satoh K."/>
        </authorList>
    </citation>
    <scope>VARIANT PAFAD PHE-279</scope>
</reference>
<reference key="23">
    <citation type="journal article" date="2000" name="Am. J. Hum. Genet.">
        <title>The Ile198Thr and Ala379Val variants of plasmatic PAF-acetylhydrolase impair catalytical activities and are associated with atopy and asthma.</title>
        <authorList>
            <person name="Kruse S."/>
            <person name="Mao X.-Q."/>
            <person name="Heinzmann A."/>
            <person name="Blattmann S."/>
            <person name="Roberts M.H."/>
            <person name="Braun S."/>
            <person name="Gao P.-S."/>
            <person name="Forster J."/>
            <person name="Kuehr J."/>
            <person name="Hopkin J.M."/>
            <person name="Shirakawa T."/>
            <person name="Deichmann K.A."/>
        </authorList>
    </citation>
    <scope>VARIANTS HIS-92; THR-198 AND ALA-379</scope>
</reference>
<sequence length="441" mass="50077">MVPPKLHVLFCLCGCLAVVYPFDWQYINPVAHMKSSAWVNKIQVLMAAASFGQTKIPRGNGPYSVGCTDLMFDHTNKGTFLRLYYPSQDNDRLDTLWIPNKEYFWGLSKFLGTHWLMGNILRLLFGSMTTPANWNSPLRPGEKYPLVVFSHGLGAFRTLYSAIGIDLASHGFIVAAVEHRDRSASATYYFKDQSAAEIGDKSWLYLRTLKQEEETHIRNEQVRQRAKECSQALSLILDIDHGKPVKNALDLKFDMEQLKDSIDREKIAVIGHSFGGATVIQTLSEDQRFRCGIALDAWMFPLGDEVYSRIPQPLFFINSEYFQYPANIIKMKKCYSPDKERKMITIRGSVHQNFADFTFATGKIIGHMLKLKGDIDSNVAIDLSNKASLAFLQKHLGLHKDFDQWDCLIEGDDENLIPGTNINTTNQHIMLQNSSGIEKYN</sequence>
<protein>
    <recommendedName>
        <fullName>Platelet-activating factor acetylhydrolase</fullName>
        <shortName>PAF acetylhydrolase</shortName>
        <ecNumber evidence="3 9 11 14 15 16 17">3.1.1.47</ecNumber>
    </recommendedName>
    <alternativeName>
        <fullName>1-alkyl-2-acetylglycerophosphocholine esterase</fullName>
    </alternativeName>
    <alternativeName>
        <fullName>2-acetyl-1-alkylglycerophosphocholine esterase</fullName>
    </alternativeName>
    <alternativeName>
        <fullName>Group-VIIA phospholipase A2</fullName>
        <shortName>gVIIA-PLA2</shortName>
    </alternativeName>
    <alternativeName>
        <fullName>LDL-associated phospholipase A2</fullName>
        <shortName>LDL-PLA(2)</shortName>
    </alternativeName>
    <alternativeName>
        <fullName>PAF 2-acylhydrolase</fullName>
    </alternativeName>
</protein>
<feature type="signal peptide">
    <location>
        <begin position="1"/>
        <end position="21"/>
    </location>
</feature>
<feature type="chain" id="PRO_0000017833" description="Platelet-activating factor acetylhydrolase">
    <location>
        <begin position="22"/>
        <end position="441"/>
    </location>
</feature>
<feature type="active site" description="Nucleophile" evidence="12">
    <location>
        <position position="273"/>
    </location>
</feature>
<feature type="active site" description="Charge relay system" evidence="2 12">
    <location>
        <position position="296"/>
    </location>
</feature>
<feature type="active site" description="Charge relay system" evidence="2 12">
    <location>
        <position position="351"/>
    </location>
</feature>
<feature type="glycosylation site" description="N-linked (GlcNAc...) asparagine" evidence="1">
    <location>
        <position position="423"/>
    </location>
</feature>
<feature type="glycosylation site" description="N-linked (GlcNAc...) asparagine">
    <location>
        <position position="433"/>
    </location>
</feature>
<feature type="sequence variant" id="VAR_047970" description="In dbSNP:rs45521937." evidence="22">
    <original>L</original>
    <variation>P</variation>
    <location>
        <position position="45"/>
    </location>
</feature>
<feature type="sequence variant" id="VAR_011583" description="Retains the ability to associate with HDL particles; dbSNP:rs1805017." evidence="5 11 22">
    <original>R</original>
    <variation>H</variation>
    <location>
        <position position="92"/>
    </location>
</feature>
<feature type="sequence variant" id="VAR_047971" description="In dbSNP:rs45454695." evidence="22">
    <original>K</original>
    <variation>N</variation>
    <location>
        <position position="191"/>
    </location>
</feature>
<feature type="sequence variant" id="VAR_011584" description="Retains the ability to associate with HDL particles; dbSNP:rs1805018." evidence="5 11 22">
    <original>I</original>
    <variation>T</variation>
    <location>
        <position position="198"/>
    </location>
</feature>
<feature type="sequence variant" id="VAR_004268" description="In PAFAD; loss of function; risk factor for coronary arthery disease and stroke; dbSNP:rs76863441." evidence="9 17 19 20 21">
    <original>V</original>
    <variation>F</variation>
    <location>
        <position position="279"/>
    </location>
</feature>
<feature type="sequence variant" id="VAR_011585" description="In PAFAD; loss of function; dbSNP:rs201256712." evidence="18">
    <original>Q</original>
    <variation>R</variation>
    <location>
        <position position="281"/>
    </location>
</feature>
<feature type="sequence variant" id="VAR_011586" description="Retains the ability to associate with HDL particles; dbSNP:rs1051931." evidence="5 8 11 22 23">
    <original>V</original>
    <variation>A</variation>
    <location>
        <position position="379"/>
    </location>
</feature>
<feature type="mutagenesis site" description="Activity is higher than wild-type." evidence="14">
    <original>S</original>
    <variation>A</variation>
    <location>
        <position position="108"/>
    </location>
</feature>
<feature type="mutagenesis site" description="Impairs the association with LDL particles." evidence="3">
    <original>H</original>
    <variation>A</variation>
    <variation>Q</variation>
    <variation>E</variation>
    <location>
        <position position="114"/>
    </location>
</feature>
<feature type="mutagenesis site" description="Impairs the association with LDL particles." evidence="3">
    <original>W</original>
    <variation>A</variation>
    <location>
        <position position="115"/>
    </location>
</feature>
<feature type="mutagenesis site" description="Reduces the association with LDL particles." evidence="3">
    <original>L</original>
    <variation>A</variation>
    <location>
        <position position="116"/>
    </location>
</feature>
<feature type="mutagenesis site" description="Reduces the association with LDL particles." evidence="3">
    <original>M</original>
    <variation>A</variation>
    <location>
        <position position="117"/>
    </location>
</feature>
<feature type="mutagenesis site" description="Impairs the association with LDL particles." evidence="3">
    <original>Y</original>
    <variation>A</variation>
    <location>
        <position position="205"/>
    </location>
</feature>
<feature type="mutagenesis site" description="Loss of activity." evidence="14">
    <original>S</original>
    <variation>A</variation>
    <location>
        <position position="273"/>
    </location>
</feature>
<feature type="mutagenesis site" description="Almost no activity." evidence="14">
    <original>D</original>
    <variation>A</variation>
    <location>
        <position position="286"/>
    </location>
</feature>
<feature type="mutagenesis site" description="Diminishes activity." evidence="14">
    <original>D</original>
    <variation>N</variation>
    <location>
        <position position="286"/>
    </location>
</feature>
<feature type="mutagenesis site" description="Loss of activity." evidence="14">
    <original>D</original>
    <variation>A</variation>
    <location>
        <position position="296"/>
    </location>
</feature>
<feature type="mutagenesis site" description="Loss of activity." evidence="14">
    <original>D</original>
    <variation>N</variation>
    <location>
        <position position="296"/>
    </location>
</feature>
<feature type="mutagenesis site" description="No change in activity." evidence="14">
    <original>D</original>
    <variation>A</variation>
    <location>
        <position position="304"/>
    </location>
</feature>
<feature type="mutagenesis site" description="Activity is higher than wild-type." evidence="14">
    <original>D</original>
    <variation>A</variation>
    <location>
        <position position="338"/>
    </location>
</feature>
<feature type="mutagenesis site" description="Loss of activity." evidence="14">
    <original>H</original>
    <variation>A</variation>
    <location>
        <position position="351"/>
    </location>
</feature>
<feature type="mutagenesis site" description="Reduces the association with HDL particles." evidence="11">
    <original>H</original>
    <variation>N</variation>
    <location>
        <position position="367"/>
    </location>
</feature>
<feature type="mutagenesis site" description="Impairs the association with HDL particles." evidence="11">
    <original>M</original>
    <variation>K</variation>
    <location>
        <position position="368"/>
    </location>
</feature>
<feature type="mutagenesis site" description="Impairs the association with HDL particles." evidence="11">
    <original>L</original>
    <variation>A</variation>
    <location>
        <position position="369"/>
    </location>
</feature>
<feature type="mutagenesis site" description="Reduces the association with HDL particles." evidence="11">
    <original>K</original>
    <variation>T</variation>
    <location>
        <position position="370"/>
    </location>
</feature>
<feature type="strand" evidence="33">
    <location>
        <begin position="54"/>
        <end position="56"/>
    </location>
</feature>
<feature type="strand" evidence="31">
    <location>
        <begin position="61"/>
        <end position="75"/>
    </location>
</feature>
<feature type="strand" evidence="31">
    <location>
        <begin position="78"/>
        <end position="88"/>
    </location>
</feature>
<feature type="strand" evidence="31">
    <location>
        <begin position="95"/>
        <end position="98"/>
    </location>
</feature>
<feature type="helix" evidence="31">
    <location>
        <begin position="101"/>
        <end position="111"/>
    </location>
</feature>
<feature type="helix" evidence="31">
    <location>
        <begin position="115"/>
        <end position="125"/>
    </location>
</feature>
<feature type="strand" evidence="31">
    <location>
        <begin position="129"/>
        <end position="134"/>
    </location>
</feature>
<feature type="strand" evidence="31">
    <location>
        <begin position="144"/>
        <end position="150"/>
    </location>
</feature>
<feature type="turn" evidence="31">
    <location>
        <begin position="157"/>
        <end position="160"/>
    </location>
</feature>
<feature type="helix" evidence="31">
    <location>
        <begin position="161"/>
        <end position="169"/>
    </location>
</feature>
<feature type="strand" evidence="31">
    <location>
        <begin position="173"/>
        <end position="177"/>
    </location>
</feature>
<feature type="strand" evidence="31">
    <location>
        <begin position="184"/>
        <end position="189"/>
    </location>
</feature>
<feature type="helix" evidence="31">
    <location>
        <begin position="193"/>
        <end position="198"/>
    </location>
</feature>
<feature type="strand" evidence="31">
    <location>
        <begin position="202"/>
        <end position="205"/>
    </location>
</feature>
<feature type="helix" evidence="31">
    <location>
        <begin position="211"/>
        <end position="213"/>
    </location>
</feature>
<feature type="helix" evidence="31">
    <location>
        <begin position="214"/>
        <end position="240"/>
    </location>
</feature>
<feature type="helix" evidence="31">
    <location>
        <begin position="255"/>
        <end position="258"/>
    </location>
</feature>
<feature type="strand" evidence="31">
    <location>
        <begin position="262"/>
        <end position="272"/>
    </location>
</feature>
<feature type="helix" evidence="31">
    <location>
        <begin position="274"/>
        <end position="285"/>
    </location>
</feature>
<feature type="strand" evidence="31">
    <location>
        <begin position="291"/>
        <end position="296"/>
    </location>
</feature>
<feature type="helix" evidence="31">
    <location>
        <begin position="304"/>
        <end position="308"/>
    </location>
</feature>
<feature type="strand" evidence="31">
    <location>
        <begin position="314"/>
        <end position="319"/>
    </location>
</feature>
<feature type="turn" evidence="31">
    <location>
        <begin position="320"/>
        <end position="322"/>
    </location>
</feature>
<feature type="helix" evidence="31">
    <location>
        <begin position="325"/>
        <end position="332"/>
    </location>
</feature>
<feature type="strand" evidence="32">
    <location>
        <begin position="337"/>
        <end position="339"/>
    </location>
</feature>
<feature type="strand" evidence="31">
    <location>
        <begin position="341"/>
        <end position="346"/>
    </location>
</feature>
<feature type="helix" evidence="31">
    <location>
        <begin position="351"/>
        <end position="354"/>
    </location>
</feature>
<feature type="helix" evidence="31">
    <location>
        <begin position="356"/>
        <end position="359"/>
    </location>
</feature>
<feature type="helix" evidence="31">
    <location>
        <begin position="363"/>
        <end position="368"/>
    </location>
</feature>
<feature type="helix" evidence="31">
    <location>
        <begin position="377"/>
        <end position="396"/>
    </location>
</feature>
<feature type="helix" evidence="31">
    <location>
        <begin position="402"/>
        <end position="405"/>
    </location>
</feature>
<feature type="helix" evidence="31">
    <location>
        <begin position="406"/>
        <end position="409"/>
    </location>
</feature>
<feature type="strand" evidence="31">
    <location>
        <begin position="416"/>
        <end position="419"/>
    </location>
</feature>
<organism>
    <name type="scientific">Homo sapiens</name>
    <name type="common">Human</name>
    <dbReference type="NCBI Taxonomy" id="9606"/>
    <lineage>
        <taxon>Eukaryota</taxon>
        <taxon>Metazoa</taxon>
        <taxon>Chordata</taxon>
        <taxon>Craniata</taxon>
        <taxon>Vertebrata</taxon>
        <taxon>Euteleostomi</taxon>
        <taxon>Mammalia</taxon>
        <taxon>Eutheria</taxon>
        <taxon>Euarchontoglires</taxon>
        <taxon>Primates</taxon>
        <taxon>Haplorrhini</taxon>
        <taxon>Catarrhini</taxon>
        <taxon>Hominidae</taxon>
        <taxon>Homo</taxon>
    </lineage>
</organism>
<accession>Q13093</accession>
<accession>A5HTT5</accession>
<accession>Q15692</accession>
<accession>Q5VTT1</accession>
<accession>Q8IVA2</accession>
<comment type="function">
    <text evidence="3 4 6 9 10 11 13 14 15 16 17">Lipoprotein-associated calcium-independent phospholipase A2 involved in phospholipid catabolism during inflammatory and oxidative stress response (PubMed:10066756, PubMed:16371369, PubMed:17090529, PubMed:2040620, PubMed:7700381, PubMed:8624782). At the lipid-aqueous interface, hydrolyzes the ester bond of fatty acyl group attached at sn-2 position of phospholipids (phospholipase A2 activity) (PubMed:10504265, PubMed:2040620). Specifically targets phospholipids with a short-chain fatty acyl group at sn-2 position (PubMed:2040620). Can hydrolyze phospholipids with long fatty acyl chains, only if they carry oxidized functional groups (PubMed:2040620, PubMed:8624782). Hydrolyzes and inactivates platelet-activating factor (PAF, 1-O-alkyl-2-acetyl-sn-glycero-3-phosphocholine), a potent pro-inflammatory signaling lipid that acts through PTAFR on various innate immune cells (PubMed:10066756, PubMed:10504265, PubMed:11590221, PubMed:16371369, PubMed:18434304, PubMed:7592717, PubMed:7700381, PubMed:8624782, PubMed:8675689). Hydrolyzes oxidatively truncated phospholipids carrying an aldehyde group at omega position, preventing their accumulation in low-density lipoprotein (LDL) particles and uncontrolled pro-inflammatory effects (PubMed:2040620, PubMed:7700381). As part of high-density lipoprotein (HDL) particles, can hydrolyze phospholipids having long-chain fatty acyl hydroperoxides at sn-2 position and protect against potential accumulation of these oxylipins in the vascular wall (PubMed:17090529). Catalyzes the release from membrane phospholipids of F2-isoprostanes, lipid biomarkers of cellular oxidative damage (PubMed:16371369).</text>
</comment>
<comment type="catalytic activity">
    <reaction evidence="3 9 11 14 15 16 17">
        <text>a 1-O-alkyl-2-acetyl-sn-glycero-3-phosphocholine + H2O = a 1-O-alkyl-sn-glycero-3-phosphocholine + acetate + H(+)</text>
        <dbReference type="Rhea" id="RHEA:17777"/>
        <dbReference type="ChEBI" id="CHEBI:15377"/>
        <dbReference type="ChEBI" id="CHEBI:15378"/>
        <dbReference type="ChEBI" id="CHEBI:30089"/>
        <dbReference type="ChEBI" id="CHEBI:30909"/>
        <dbReference type="ChEBI" id="CHEBI:36707"/>
        <dbReference type="EC" id="3.1.1.47"/>
    </reaction>
    <physiologicalReaction direction="left-to-right" evidence="30">
        <dbReference type="Rhea" id="RHEA:17778"/>
    </physiologicalReaction>
</comment>
<comment type="catalytic activity">
    <reaction evidence="4">
        <text>1-O-decyl-2-acetyl-sn-glycero-3-phosphocholine + H2O = 1-O-decyl-sn-glycero-3-phosphocholine + acetate + H(+)</text>
        <dbReference type="Rhea" id="RHEA:41376"/>
        <dbReference type="ChEBI" id="CHEBI:15377"/>
        <dbReference type="ChEBI" id="CHEBI:15378"/>
        <dbReference type="ChEBI" id="CHEBI:30089"/>
        <dbReference type="ChEBI" id="CHEBI:78108"/>
        <dbReference type="ChEBI" id="CHEBI:78109"/>
    </reaction>
    <physiologicalReaction direction="left-to-right" evidence="25">
        <dbReference type="Rhea" id="RHEA:41377"/>
    </physiologicalReaction>
</comment>
<comment type="catalytic activity">
    <reaction evidence="4">
        <text>1-O-dodecyl-2-acetyl-sn-glycero-3-phosphocholine + H2O = 1-O-dodecyl-sn-glycero-3-phosphocholine + acetate + H(+)</text>
        <dbReference type="Rhea" id="RHEA:41372"/>
        <dbReference type="ChEBI" id="CHEBI:15377"/>
        <dbReference type="ChEBI" id="CHEBI:15378"/>
        <dbReference type="ChEBI" id="CHEBI:30089"/>
        <dbReference type="ChEBI" id="CHEBI:78103"/>
        <dbReference type="ChEBI" id="CHEBI:78104"/>
    </reaction>
    <physiologicalReaction direction="left-to-right" evidence="25">
        <dbReference type="Rhea" id="RHEA:41373"/>
    </physiologicalReaction>
</comment>
<comment type="catalytic activity">
    <reaction evidence="4">
        <text>1-O-tetradecyl-2-acetyl-sn-glycero-3-phosphocholine + H2O = 1-O-tetradecyl-sn-glycero-3-phosphocholine + acetate + H(+)</text>
        <dbReference type="Rhea" id="RHEA:41368"/>
        <dbReference type="ChEBI" id="CHEBI:15377"/>
        <dbReference type="ChEBI" id="CHEBI:15378"/>
        <dbReference type="ChEBI" id="CHEBI:30089"/>
        <dbReference type="ChEBI" id="CHEBI:78101"/>
        <dbReference type="ChEBI" id="CHEBI:78102"/>
    </reaction>
    <physiologicalReaction direction="left-to-right" evidence="25">
        <dbReference type="Rhea" id="RHEA:41369"/>
    </physiologicalReaction>
</comment>
<comment type="catalytic activity">
    <reaction evidence="4 6">
        <text>1-O-hexadecyl-2-acetyl-sn-glycero-3-phosphocholine + H2O = 1-O-hexadecyl-sn-glycero-3-phosphocholine + acetate + H(+)</text>
        <dbReference type="Rhea" id="RHEA:40479"/>
        <dbReference type="ChEBI" id="CHEBI:15377"/>
        <dbReference type="ChEBI" id="CHEBI:15378"/>
        <dbReference type="ChEBI" id="CHEBI:30089"/>
        <dbReference type="ChEBI" id="CHEBI:44811"/>
        <dbReference type="ChEBI" id="CHEBI:64496"/>
    </reaction>
    <physiologicalReaction direction="left-to-right" evidence="25">
        <dbReference type="Rhea" id="RHEA:40480"/>
    </physiologicalReaction>
</comment>
<comment type="catalytic activity">
    <reaction evidence="4">
        <text>1-O-octadecyl-2-acetyl-sn-glycero-3-phosphocholine + H2O = 1-O-octadecyl-sn-glycero-3-phosphocholine + acetate + H(+)</text>
        <dbReference type="Rhea" id="RHEA:41183"/>
        <dbReference type="ChEBI" id="CHEBI:15377"/>
        <dbReference type="ChEBI" id="CHEBI:15378"/>
        <dbReference type="ChEBI" id="CHEBI:30089"/>
        <dbReference type="ChEBI" id="CHEBI:52450"/>
        <dbReference type="ChEBI" id="CHEBI:75216"/>
    </reaction>
    <physiologicalReaction direction="left-to-right" evidence="25">
        <dbReference type="Rhea" id="RHEA:41184"/>
    </physiologicalReaction>
</comment>
<comment type="catalytic activity">
    <reaction evidence="13">
        <text>1-hexadecanoyl-2-acetyl-sn-glycero-3-phosphocholine + H2O = 1-hexadecanoyl-sn-glycero-3-phosphocholine + acetate + H(+)</text>
        <dbReference type="Rhea" id="RHEA:41203"/>
        <dbReference type="ChEBI" id="CHEBI:15377"/>
        <dbReference type="ChEBI" id="CHEBI:15378"/>
        <dbReference type="ChEBI" id="CHEBI:30089"/>
        <dbReference type="ChEBI" id="CHEBI:72998"/>
        <dbReference type="ChEBI" id="CHEBI:75219"/>
    </reaction>
    <physiologicalReaction direction="left-to-right" evidence="28">
        <dbReference type="Rhea" id="RHEA:41204"/>
    </physiologicalReaction>
</comment>
<comment type="catalytic activity">
    <reaction evidence="13">
        <text>1-hexadecanoyl-2-propionyl-sn-glycero-3-phosphocholine + H2O = propanoate + 1-hexadecanoyl-sn-glycero-3-phosphocholine + H(+)</text>
        <dbReference type="Rhea" id="RHEA:41191"/>
        <dbReference type="ChEBI" id="CHEBI:15377"/>
        <dbReference type="ChEBI" id="CHEBI:15378"/>
        <dbReference type="ChEBI" id="CHEBI:17272"/>
        <dbReference type="ChEBI" id="CHEBI:72998"/>
        <dbReference type="ChEBI" id="CHEBI:77831"/>
    </reaction>
    <physiologicalReaction direction="left-to-right" evidence="28">
        <dbReference type="Rhea" id="RHEA:41192"/>
    </physiologicalReaction>
</comment>
<comment type="catalytic activity">
    <reaction evidence="13">
        <text>1-hexadecanoyl-2-butanoyl-sn-glycero-3-phosphocholine + H2O = butanoate + 1-hexadecanoyl-sn-glycero-3-phosphocholine + H(+)</text>
        <dbReference type="Rhea" id="RHEA:41195"/>
        <dbReference type="ChEBI" id="CHEBI:15377"/>
        <dbReference type="ChEBI" id="CHEBI:15378"/>
        <dbReference type="ChEBI" id="CHEBI:17968"/>
        <dbReference type="ChEBI" id="CHEBI:72998"/>
        <dbReference type="ChEBI" id="CHEBI:77832"/>
    </reaction>
    <physiologicalReaction direction="left-to-right" evidence="28">
        <dbReference type="Rhea" id="RHEA:41196"/>
    </physiologicalReaction>
</comment>
<comment type="catalytic activity">
    <reaction evidence="13">
        <text>1-hexadecanoyl-2-pentanoyl-sn-glycero-3-phosphocholine + H2O = pentanoate + 1-hexadecanoyl-sn-glycero-3-phosphocholine + H(+)</text>
        <dbReference type="Rhea" id="RHEA:41199"/>
        <dbReference type="ChEBI" id="CHEBI:15377"/>
        <dbReference type="ChEBI" id="CHEBI:15378"/>
        <dbReference type="ChEBI" id="CHEBI:31011"/>
        <dbReference type="ChEBI" id="CHEBI:72998"/>
        <dbReference type="ChEBI" id="CHEBI:77833"/>
    </reaction>
    <physiologicalReaction direction="left-to-right" evidence="28">
        <dbReference type="Rhea" id="RHEA:41200"/>
    </physiologicalReaction>
</comment>
<comment type="catalytic activity">
    <reaction evidence="13 15">
        <text>1-hexadecanoyl-2-glutaroyl-sn-glycero-3-phosphocholine + H2O = glutarate + 1-hexadecanoyl-sn-glycero-3-phosphocholine + H(+)</text>
        <dbReference type="Rhea" id="RHEA:41159"/>
        <dbReference type="ChEBI" id="CHEBI:15377"/>
        <dbReference type="ChEBI" id="CHEBI:15378"/>
        <dbReference type="ChEBI" id="CHEBI:30921"/>
        <dbReference type="ChEBI" id="CHEBI:72998"/>
        <dbReference type="ChEBI" id="CHEBI:77756"/>
    </reaction>
    <physiologicalReaction direction="left-to-right" evidence="28 29">
        <dbReference type="Rhea" id="RHEA:41160"/>
    </physiologicalReaction>
</comment>
<comment type="catalytic activity">
    <reaction evidence="9 13">
        <text>1-hexadecanoyl-2-(5-oxopentanoyl)-sn-glycero-3-phosphocholine + H2O = 5-oxopentanoate + 1-hexadecanoyl-sn-glycero-3-phosphocholine + H(+)</text>
        <dbReference type="Rhea" id="RHEA:40483"/>
        <dbReference type="ChEBI" id="CHEBI:15377"/>
        <dbReference type="ChEBI" id="CHEBI:15378"/>
        <dbReference type="ChEBI" id="CHEBI:16120"/>
        <dbReference type="ChEBI" id="CHEBI:72998"/>
        <dbReference type="ChEBI" id="CHEBI:77890"/>
    </reaction>
    <physiologicalReaction direction="left-to-right" evidence="26 28">
        <dbReference type="Rhea" id="RHEA:40484"/>
    </physiologicalReaction>
</comment>
<comment type="catalytic activity">
    <reaction evidence="13">
        <text>1-hexadecanoyl-2-(9-oxononanoyl)-sn-glycero-3-phosphocholine + H2O = 9-oxononanoate + 1-hexadecanoyl-sn-glycero-3-phosphocholine + H(+)</text>
        <dbReference type="Rhea" id="RHEA:41179"/>
        <dbReference type="ChEBI" id="CHEBI:15377"/>
        <dbReference type="ChEBI" id="CHEBI:15378"/>
        <dbReference type="ChEBI" id="CHEBI:61042"/>
        <dbReference type="ChEBI" id="CHEBI:72998"/>
        <dbReference type="ChEBI" id="CHEBI:77812"/>
    </reaction>
    <physiologicalReaction direction="left-to-right" evidence="28">
        <dbReference type="Rhea" id="RHEA:41180"/>
    </physiologicalReaction>
</comment>
<comment type="catalytic activity">
    <reaction evidence="9 10">
        <text>1-hexadecanoyl-2-[9-hydroperoxy-(10E-octadecenoyl)]-sn-glycero-3-phosphocholine + H2O = 9-hydroperoxy-10E-octadecenoate + 1-hexadecanoyl-sn-glycero-3-phosphocholine + H(+)</text>
        <dbReference type="Rhea" id="RHEA:41151"/>
        <dbReference type="ChEBI" id="CHEBI:15377"/>
        <dbReference type="ChEBI" id="CHEBI:15378"/>
        <dbReference type="ChEBI" id="CHEBI:72998"/>
        <dbReference type="ChEBI" id="CHEBI:77753"/>
        <dbReference type="ChEBI" id="CHEBI:77754"/>
    </reaction>
    <physiologicalReaction direction="left-to-right" evidence="26 27">
        <dbReference type="Rhea" id="RHEA:41152"/>
    </physiologicalReaction>
</comment>
<comment type="catalytic activity">
    <reaction evidence="10">
        <text>1-hexadecanoyl-2-(10-hydroperoxy-8E-octadecenoyl)-sn-glycero-3-phosphocholine + H2O = 10-hydroperoxy-(8E)-octadecenoate + 1-hexadecanoyl-sn-glycero-3-phosphocholine + H(+)</text>
        <dbReference type="Rhea" id="RHEA:41155"/>
        <dbReference type="ChEBI" id="CHEBI:15377"/>
        <dbReference type="ChEBI" id="CHEBI:15378"/>
        <dbReference type="ChEBI" id="CHEBI:72998"/>
        <dbReference type="ChEBI" id="CHEBI:77749"/>
        <dbReference type="ChEBI" id="CHEBI:77755"/>
    </reaction>
    <physiologicalReaction direction="left-to-right" evidence="27">
        <dbReference type="Rhea" id="RHEA:41156"/>
    </physiologicalReaction>
</comment>
<comment type="biophysicochemical properties">
    <kinetics>
        <KM evidence="13">12.5 uM for 1-hexadecanoyl-2-acetyl-sn-glycero-3-phosphocholine</KM>
        <KM evidence="13">3.1 uM for 1-hexadecanoyl-2-propionyl-sn-glycero-3-phosphocholine</KM>
        <KM evidence="13">7.9 uM for 1-hexadecanoyl-2-butanoyl-sn-glycero-3-phosphocholine</KM>
        <KM evidence="13">6.2 uM for 1-hexadecanoyl-2-pentanoyl-sn-glycero-3-phosphocholine</KM>
        <KM evidence="13">11.3 uM for 1-hexadecanoyl-2-(5-oxopentanoyl)-sn-glycero-3-phosphocholine</KM>
        <KM evidence="13">15.5 uM for 1-hexadecanoyl-2-(9-oxononanoyl)-sn-glycero-3-phosphocholine</KM>
        <KM evidence="9">43.1 uM for 1-hexadecanoyl-2-(5-oxopentanoyl)-sn-glycero-3-phosphocholine</KM>
        <Vmax evidence="13">167.0 umol/h/mg enzyme toward 1-hexadecanoyl-2-acetyl-sn-glycero-3-phosphocholine</Vmax>
        <Vmax evidence="13">36.1 umol/h/mg enzyme toward 1-hexadecanoyl-2-propionyl-sn-glycero-3-phosphocholine</Vmax>
        <Vmax evidence="13">43.4 umol/h/mg enzyme toward 1-hexadecanoyl-2-butanoyl-sn-glycero-3-phosphocholine</Vmax>
        <Vmax evidence="13">42.2 umol/h/mg enzyme toward 1-hexadecanoyl-2-pentanoyl-sn-glycero-3-phosphocholine</Vmax>
        <Vmax evidence="13">100.0 umol/h/mg enzyme toward 1-hexadecanoyl-2-(5-oxopentanoyl)-sn-glycero-3-phosphocholine</Vmax>
        <Vmax evidence="13">98.4 umol/h/mg enzyme toward 1-hexadecanoyl-2-(9-oxononanoyl)-sn-glycero-3-phosphocholine</Vmax>
        <Vmax evidence="9">5.0 umol/min/mg enzyme toward 1-hexadecanoyl-2-(5-oxopentanoyl)-sn-glycero-3-phosphocholine</Vmax>
    </kinetics>
</comment>
<comment type="interaction">
    <interactant intactId="EBI-2828127">
        <id>Q13093</id>
    </interactant>
    <interactant intactId="EBI-728153">
        <id>Q16849</id>
        <label>PTPRN</label>
    </interactant>
    <organismsDiffer>false</organismsDiffer>
    <experiments>2</experiments>
</comment>
<comment type="subcellular location">
    <subcellularLocation>
        <location evidence="3 6 7 11">Secreted</location>
        <location evidence="3 6 7 11">Extracellular space</location>
    </subcellularLocation>
    <text evidence="3 6 7 11">Associates with both LDL and HDL particles in plasma (PubMed:10066756, PubMed:11590221, PubMed:12821559, PubMed:18434304). Mainly associates with pro-inflammatory electronegative LDL particles (PubMed:12821559).</text>
</comment>
<comment type="tissue specificity">
    <text evidence="6 7">Plasma (PubMed:11590221, PubMed:12821559). Secreted by macrophages (at protein level) (PubMed:11590221).</text>
</comment>
<comment type="induction">
    <text evidence="6">Up-regulated upon monocyte differentiation toward macrophage lineage.</text>
</comment>
<comment type="PTM">
    <text evidence="6">N-glycosylated. Macrophage-derived PLA2G7 carries sialylated complex-type N-glycans that hinder its binding to HDL particles.</text>
</comment>
<comment type="disease" evidence="17 18 19 20 21">
    <disease id="DI-02171">
        <name>Platelet-activating factor acetylhydrolase deficiency</name>
        <acronym>PAFAD</acronym>
        <description>An enzymatic deficiency that results in exacerbated bodily response to inflammatory agents. It can be associated with several disease states including inflammatory gastrointestinal disorders, asthma and atopy. Asthmatic individuals with PAFAD may manifest aggravated respiratory symptoms.</description>
        <dbReference type="MIM" id="614278"/>
    </disease>
    <text>The disease is caused by variants affecting the gene represented in this entry.</text>
</comment>
<comment type="similarity">
    <text evidence="24">Belongs to the AB hydrolase superfamily. Lipase family.</text>
</comment>
<evidence type="ECO:0000255" key="1"/>
<evidence type="ECO:0000255" key="2">
    <source>
        <dbReference type="PROSITE-ProRule" id="PRU10037"/>
    </source>
</evidence>
<evidence type="ECO:0000269" key="3">
    <source>
    </source>
</evidence>
<evidence type="ECO:0000269" key="4">
    <source>
    </source>
</evidence>
<evidence type="ECO:0000269" key="5">
    <source>
    </source>
</evidence>
<evidence type="ECO:0000269" key="6">
    <source>
    </source>
</evidence>
<evidence type="ECO:0000269" key="7">
    <source>
    </source>
</evidence>
<evidence type="ECO:0000269" key="8">
    <source>
    </source>
</evidence>
<evidence type="ECO:0000269" key="9">
    <source>
    </source>
</evidence>
<evidence type="ECO:0000269" key="10">
    <source>
    </source>
</evidence>
<evidence type="ECO:0000269" key="11">
    <source>
    </source>
</evidence>
<evidence type="ECO:0000269" key="12">
    <source>
    </source>
</evidence>
<evidence type="ECO:0000269" key="13">
    <source>
    </source>
</evidence>
<evidence type="ECO:0000269" key="14">
    <source>
    </source>
</evidence>
<evidence type="ECO:0000269" key="15">
    <source>
    </source>
</evidence>
<evidence type="ECO:0000269" key="16">
    <source>
    </source>
</evidence>
<evidence type="ECO:0000269" key="17">
    <source>
    </source>
</evidence>
<evidence type="ECO:0000269" key="18">
    <source>
    </source>
</evidence>
<evidence type="ECO:0000269" key="19">
    <source>
    </source>
</evidence>
<evidence type="ECO:0000269" key="20">
    <source>
    </source>
</evidence>
<evidence type="ECO:0000269" key="21">
    <source>
    </source>
</evidence>
<evidence type="ECO:0000269" key="22">
    <source ref="3"/>
</evidence>
<evidence type="ECO:0000269" key="23">
    <source ref="5"/>
</evidence>
<evidence type="ECO:0000305" key="24"/>
<evidence type="ECO:0000305" key="25">
    <source>
    </source>
</evidence>
<evidence type="ECO:0000305" key="26">
    <source>
    </source>
</evidence>
<evidence type="ECO:0000305" key="27">
    <source>
    </source>
</evidence>
<evidence type="ECO:0000305" key="28">
    <source>
    </source>
</evidence>
<evidence type="ECO:0000305" key="29">
    <source>
    </source>
</evidence>
<evidence type="ECO:0000305" key="30">
    <source>
    </source>
</evidence>
<evidence type="ECO:0007829" key="31">
    <source>
        <dbReference type="PDB" id="3D59"/>
    </source>
</evidence>
<evidence type="ECO:0007829" key="32">
    <source>
        <dbReference type="PDB" id="3F96"/>
    </source>
</evidence>
<evidence type="ECO:0007829" key="33">
    <source>
        <dbReference type="PDB" id="3F98"/>
    </source>
</evidence>
<name>PAFA_HUMAN</name>
<keyword id="KW-0002">3D-structure</keyword>
<keyword id="KW-1058">Asthma</keyword>
<keyword id="KW-0903">Direct protein sequencing</keyword>
<keyword id="KW-0225">Disease variant</keyword>
<keyword id="KW-0325">Glycoprotein</keyword>
<keyword id="KW-0345">HDL</keyword>
<keyword id="KW-0378">Hydrolase</keyword>
<keyword id="KW-0427">LDL</keyword>
<keyword id="KW-0442">Lipid degradation</keyword>
<keyword id="KW-0443">Lipid metabolism</keyword>
<keyword id="KW-0595">Phospholipid degradation</keyword>
<keyword id="KW-1208">Phospholipid metabolism</keyword>
<keyword id="KW-1267">Proteomics identification</keyword>
<keyword id="KW-1185">Reference proteome</keyword>
<keyword id="KW-0964">Secreted</keyword>
<keyword id="KW-0732">Signal</keyword>